<accession>Q5LW31</accession>
<name>RL17_RUEPO</name>
<evidence type="ECO:0000255" key="1">
    <source>
        <dbReference type="HAMAP-Rule" id="MF_01368"/>
    </source>
</evidence>
<evidence type="ECO:0000305" key="2"/>
<keyword id="KW-1185">Reference proteome</keyword>
<keyword id="KW-0687">Ribonucleoprotein</keyword>
<keyword id="KW-0689">Ribosomal protein</keyword>
<comment type="subunit">
    <text evidence="1">Part of the 50S ribosomal subunit. Contacts protein L32.</text>
</comment>
<comment type="similarity">
    <text evidence="1">Belongs to the bacterial ribosomal protein bL17 family.</text>
</comment>
<sequence length="140" mass="15923">MRHARGYRRLNRTHEHRKALFANMAGSLIEHEQIKTTLPKAKELRPIVEKLITLGKRGDLHARRQAAAQLKEDKDVAKLFDVLAERYKDRQGGYVRILKAGFRYGDMAPMAIIEFVDRDVDAKGAADKARLAEEEAAAEE</sequence>
<proteinExistence type="inferred from homology"/>
<gene>
    <name evidence="1" type="primary">rplQ</name>
    <name type="ordered locus">SPO0512</name>
</gene>
<protein>
    <recommendedName>
        <fullName evidence="1">Large ribosomal subunit protein bL17</fullName>
    </recommendedName>
    <alternativeName>
        <fullName evidence="2">50S ribosomal protein L17</fullName>
    </alternativeName>
</protein>
<feature type="chain" id="PRO_0000267948" description="Large ribosomal subunit protein bL17">
    <location>
        <begin position="1"/>
        <end position="140"/>
    </location>
</feature>
<reference key="1">
    <citation type="journal article" date="2004" name="Nature">
        <title>Genome sequence of Silicibacter pomeroyi reveals adaptations to the marine environment.</title>
        <authorList>
            <person name="Moran M.A."/>
            <person name="Buchan A."/>
            <person name="Gonzalez J.M."/>
            <person name="Heidelberg J.F."/>
            <person name="Whitman W.B."/>
            <person name="Kiene R.P."/>
            <person name="Henriksen J.R."/>
            <person name="King G.M."/>
            <person name="Belas R."/>
            <person name="Fuqua C."/>
            <person name="Brinkac L.M."/>
            <person name="Lewis M."/>
            <person name="Johri S."/>
            <person name="Weaver B."/>
            <person name="Pai G."/>
            <person name="Eisen J.A."/>
            <person name="Rahe E."/>
            <person name="Sheldon W.M."/>
            <person name="Ye W."/>
            <person name="Miller T.R."/>
            <person name="Carlton J."/>
            <person name="Rasko D.A."/>
            <person name="Paulsen I.T."/>
            <person name="Ren Q."/>
            <person name="Daugherty S.C."/>
            <person name="DeBoy R.T."/>
            <person name="Dodson R.J."/>
            <person name="Durkin A.S."/>
            <person name="Madupu R."/>
            <person name="Nelson W.C."/>
            <person name="Sullivan S.A."/>
            <person name="Rosovitz M.J."/>
            <person name="Haft D.H."/>
            <person name="Selengut J."/>
            <person name="Ward N."/>
        </authorList>
    </citation>
    <scope>NUCLEOTIDE SEQUENCE [LARGE SCALE GENOMIC DNA]</scope>
    <source>
        <strain>ATCC 700808 / DSM 15171 / DSS-3</strain>
    </source>
</reference>
<reference key="2">
    <citation type="journal article" date="2014" name="Stand. Genomic Sci.">
        <title>An updated genome annotation for the model marine bacterium Ruegeria pomeroyi DSS-3.</title>
        <authorList>
            <person name="Rivers A.R."/>
            <person name="Smith C.B."/>
            <person name="Moran M.A."/>
        </authorList>
    </citation>
    <scope>GENOME REANNOTATION</scope>
    <source>
        <strain>ATCC 700808 / DSM 15171 / DSS-3</strain>
    </source>
</reference>
<organism>
    <name type="scientific">Ruegeria pomeroyi (strain ATCC 700808 / DSM 15171 / DSS-3)</name>
    <name type="common">Silicibacter pomeroyi</name>
    <dbReference type="NCBI Taxonomy" id="246200"/>
    <lineage>
        <taxon>Bacteria</taxon>
        <taxon>Pseudomonadati</taxon>
        <taxon>Pseudomonadota</taxon>
        <taxon>Alphaproteobacteria</taxon>
        <taxon>Rhodobacterales</taxon>
        <taxon>Roseobacteraceae</taxon>
        <taxon>Ruegeria</taxon>
    </lineage>
</organism>
<dbReference type="EMBL" id="CP000031">
    <property type="protein sequence ID" value="AAV93829.1"/>
    <property type="molecule type" value="Genomic_DNA"/>
</dbReference>
<dbReference type="RefSeq" id="WP_011046271.1">
    <property type="nucleotide sequence ID" value="NC_003911.12"/>
</dbReference>
<dbReference type="SMR" id="Q5LW31"/>
<dbReference type="STRING" id="246200.SPO0512"/>
<dbReference type="PaxDb" id="246200-SPO0512"/>
<dbReference type="KEGG" id="sil:SPO0512"/>
<dbReference type="eggNOG" id="COG0203">
    <property type="taxonomic scope" value="Bacteria"/>
</dbReference>
<dbReference type="HOGENOM" id="CLU_074407_2_0_5"/>
<dbReference type="OrthoDB" id="9809073at2"/>
<dbReference type="Proteomes" id="UP000001023">
    <property type="component" value="Chromosome"/>
</dbReference>
<dbReference type="GO" id="GO:0022625">
    <property type="term" value="C:cytosolic large ribosomal subunit"/>
    <property type="evidence" value="ECO:0007669"/>
    <property type="project" value="TreeGrafter"/>
</dbReference>
<dbReference type="GO" id="GO:0003735">
    <property type="term" value="F:structural constituent of ribosome"/>
    <property type="evidence" value="ECO:0007669"/>
    <property type="project" value="InterPro"/>
</dbReference>
<dbReference type="GO" id="GO:0006412">
    <property type="term" value="P:translation"/>
    <property type="evidence" value="ECO:0007669"/>
    <property type="project" value="UniProtKB-UniRule"/>
</dbReference>
<dbReference type="FunFam" id="3.90.1030.10:FF:000001">
    <property type="entry name" value="50S ribosomal protein L17"/>
    <property type="match status" value="1"/>
</dbReference>
<dbReference type="Gene3D" id="3.90.1030.10">
    <property type="entry name" value="Ribosomal protein L17"/>
    <property type="match status" value="1"/>
</dbReference>
<dbReference type="HAMAP" id="MF_01368">
    <property type="entry name" value="Ribosomal_bL17"/>
    <property type="match status" value="1"/>
</dbReference>
<dbReference type="InterPro" id="IPR000456">
    <property type="entry name" value="Ribosomal_bL17"/>
</dbReference>
<dbReference type="InterPro" id="IPR047859">
    <property type="entry name" value="Ribosomal_bL17_CS"/>
</dbReference>
<dbReference type="InterPro" id="IPR036373">
    <property type="entry name" value="Ribosomal_bL17_sf"/>
</dbReference>
<dbReference type="NCBIfam" id="TIGR00059">
    <property type="entry name" value="L17"/>
    <property type="match status" value="1"/>
</dbReference>
<dbReference type="PANTHER" id="PTHR14413:SF16">
    <property type="entry name" value="LARGE RIBOSOMAL SUBUNIT PROTEIN BL17M"/>
    <property type="match status" value="1"/>
</dbReference>
<dbReference type="PANTHER" id="PTHR14413">
    <property type="entry name" value="RIBOSOMAL PROTEIN L17"/>
    <property type="match status" value="1"/>
</dbReference>
<dbReference type="Pfam" id="PF01196">
    <property type="entry name" value="Ribosomal_L17"/>
    <property type="match status" value="1"/>
</dbReference>
<dbReference type="SUPFAM" id="SSF64263">
    <property type="entry name" value="Prokaryotic ribosomal protein L17"/>
    <property type="match status" value="1"/>
</dbReference>
<dbReference type="PROSITE" id="PS01167">
    <property type="entry name" value="RIBOSOMAL_L17"/>
    <property type="match status" value="1"/>
</dbReference>